<dbReference type="EMBL" id="BX572605">
    <property type="protein sequence ID" value="CAE29414.1"/>
    <property type="molecule type" value="Genomic_DNA"/>
</dbReference>
<dbReference type="PIR" id="A00143">
    <property type="entry name" value="CCRF6P"/>
</dbReference>
<dbReference type="RefSeq" id="WP_011159509.1">
    <property type="nucleotide sequence ID" value="NZ_CP116810.1"/>
</dbReference>
<dbReference type="PDB" id="1S05">
    <property type="method" value="NMR"/>
    <property type="chains" value="A=21-149"/>
</dbReference>
<dbReference type="PDBsum" id="1S05"/>
<dbReference type="SMR" id="P00150"/>
<dbReference type="STRING" id="258594.RPA3973"/>
<dbReference type="GeneID" id="66895089"/>
<dbReference type="eggNOG" id="COG3909">
    <property type="taxonomic scope" value="Bacteria"/>
</dbReference>
<dbReference type="HOGENOM" id="CLU_106713_2_0_5"/>
<dbReference type="PhylomeDB" id="P00150"/>
<dbReference type="EvolutionaryTrace" id="P00150"/>
<dbReference type="GO" id="GO:0042597">
    <property type="term" value="C:periplasmic space"/>
    <property type="evidence" value="ECO:0007669"/>
    <property type="project" value="InterPro"/>
</dbReference>
<dbReference type="GO" id="GO:0009055">
    <property type="term" value="F:electron transfer activity"/>
    <property type="evidence" value="ECO:0007669"/>
    <property type="project" value="InterPro"/>
</dbReference>
<dbReference type="GO" id="GO:0020037">
    <property type="term" value="F:heme binding"/>
    <property type="evidence" value="ECO:0007669"/>
    <property type="project" value="InterPro"/>
</dbReference>
<dbReference type="GO" id="GO:0005506">
    <property type="term" value="F:iron ion binding"/>
    <property type="evidence" value="ECO:0007669"/>
    <property type="project" value="InterPro"/>
</dbReference>
<dbReference type="GO" id="GO:0022900">
    <property type="term" value="P:electron transport chain"/>
    <property type="evidence" value="ECO:0007669"/>
    <property type="project" value="InterPro"/>
</dbReference>
<dbReference type="Gene3D" id="1.20.120.10">
    <property type="entry name" value="Cytochrome c/b562"/>
    <property type="match status" value="1"/>
</dbReference>
<dbReference type="InterPro" id="IPR010980">
    <property type="entry name" value="Cyt_c/b562"/>
</dbReference>
<dbReference type="InterPro" id="IPR002321">
    <property type="entry name" value="Cyt_c_II"/>
</dbReference>
<dbReference type="InterPro" id="IPR012127">
    <property type="entry name" value="Cyt_c_prime"/>
</dbReference>
<dbReference type="Pfam" id="PF01322">
    <property type="entry name" value="Cytochrom_C_2"/>
    <property type="match status" value="1"/>
</dbReference>
<dbReference type="PIRSF" id="PIRSF000027">
    <property type="entry name" value="Cytc_c_prime"/>
    <property type="match status" value="1"/>
</dbReference>
<dbReference type="SUPFAM" id="SSF47175">
    <property type="entry name" value="Cytochromes"/>
    <property type="match status" value="1"/>
</dbReference>
<dbReference type="PROSITE" id="PS51009">
    <property type="entry name" value="CYTCII"/>
    <property type="match status" value="1"/>
</dbReference>
<proteinExistence type="evidence at protein level"/>
<gene>
    <name type="ordered locus">RPA3973</name>
</gene>
<organism>
    <name type="scientific">Rhodopseudomonas palustris (strain ATCC BAA-98 / CGA009)</name>
    <dbReference type="NCBI Taxonomy" id="258594"/>
    <lineage>
        <taxon>Bacteria</taxon>
        <taxon>Pseudomonadati</taxon>
        <taxon>Pseudomonadota</taxon>
        <taxon>Alphaproteobacteria</taxon>
        <taxon>Hyphomicrobiales</taxon>
        <taxon>Nitrobacteraceae</taxon>
        <taxon>Rhodopseudomonas</taxon>
    </lineage>
</organism>
<sequence length="149" mass="16149">MLRTVIVAGALVLTASAVMAQQDLVDKTQKLMKDNGRNMMVLGAIAKGEKPYDQAAVDAALKQFDETAKDLPKLFPDSVKGLKPFDSKYSSSPKIWAERAKFDTEIADFAKAVDGAKGKIKDVDTLKAAMQPIGKACGNCHENFRDKEG</sequence>
<comment type="function">
    <text>Low-spin monoheme cytochrome c.</text>
</comment>
<comment type="subunit">
    <text>Monomer.</text>
</comment>
<comment type="PTM">
    <text evidence="1">Binds 1 heme c group covalently per subunit.</text>
</comment>
<protein>
    <recommendedName>
        <fullName evidence="4">Cytochrome c-556</fullName>
    </recommendedName>
    <alternativeName>
        <fullName evidence="3">Cytochrome c556</fullName>
    </alternativeName>
</protein>
<reference key="1">
    <citation type="journal article" date="2004" name="Nat. Biotechnol.">
        <title>Complete genome sequence of the metabolically versatile photosynthetic bacterium Rhodopseudomonas palustris.</title>
        <authorList>
            <person name="Larimer F.W."/>
            <person name="Chain P."/>
            <person name="Hauser L."/>
            <person name="Lamerdin J.E."/>
            <person name="Malfatti S."/>
            <person name="Do L."/>
            <person name="Land M.L."/>
            <person name="Pelletier D.A."/>
            <person name="Beatty J.T."/>
            <person name="Lang A.S."/>
            <person name="Tabita F.R."/>
            <person name="Gibson J.L."/>
            <person name="Hanson T.E."/>
            <person name="Bobst C."/>
            <person name="Torres y Torres J.L."/>
            <person name="Peres C."/>
            <person name="Harrison F.H."/>
            <person name="Gibson J."/>
            <person name="Harwood C.S."/>
        </authorList>
    </citation>
    <scope>NUCLEOTIDE SEQUENCE [LARGE SCALE GENOMIC DNA]</scope>
    <source>
        <strain>ATCC BAA-98 / CGA009</strain>
    </source>
</reference>
<reference key="2">
    <citation type="journal article" date="1981" name="Proc. Natl. Acad. Sci. U.S.A.">
        <title>Amino acid sequences of bacterial cytochromes c' and c-556.</title>
        <authorList>
            <person name="Ambler R.P."/>
            <person name="Bartsch R.G."/>
            <person name="Daniel M."/>
            <person name="Kamen M.D."/>
            <person name="McLellan L."/>
            <person name="Meyer T.E."/>
            <person name="van Beeumen J."/>
        </authorList>
    </citation>
    <scope>PROTEIN SEQUENCE OF 21-149</scope>
    <source>
        <strain>ATCC 17007 / ATH 2.1.37 / NCIB 11774</strain>
    </source>
</reference>
<reference evidence="5" key="3">
    <citation type="journal article" date="2004" name="J. Biol. Inorg. Chem.">
        <title>NMR-validated structural model for oxidized Rhodopseudomonas palustris cytochrome c(556).</title>
        <authorList>
            <person name="Bertini I."/>
            <person name="Faraone-Mennella J."/>
            <person name="Gray H.B."/>
            <person name="Luchinat C."/>
            <person name="Parigi G."/>
            <person name="Winkler J.R."/>
        </authorList>
    </citation>
    <scope>STRUCTURE BY NMR OF 21-149 IN COMPLEX WITH HEME C</scope>
</reference>
<name>C556_RHOPA</name>
<feature type="signal peptide" evidence="2">
    <location>
        <begin position="1"/>
        <end position="20"/>
    </location>
</feature>
<feature type="chain" id="PRO_0000006548" description="Cytochrome c-556">
    <location>
        <begin position="21"/>
        <end position="149"/>
    </location>
</feature>
<feature type="binding site" description="axial binding residue" evidence="1 5">
    <location>
        <position position="32"/>
    </location>
    <ligand>
        <name>heme c</name>
        <dbReference type="ChEBI" id="CHEBI:61717"/>
    </ligand>
    <ligandPart>
        <name>Fe</name>
        <dbReference type="ChEBI" id="CHEBI:18248"/>
    </ligandPart>
</feature>
<feature type="binding site" description="covalent" evidence="1 5">
    <location>
        <position position="137"/>
    </location>
    <ligand>
        <name>heme c</name>
        <dbReference type="ChEBI" id="CHEBI:61717"/>
    </ligand>
</feature>
<feature type="binding site" description="covalent" evidence="1 5">
    <location>
        <position position="140"/>
    </location>
    <ligand>
        <name>heme c</name>
        <dbReference type="ChEBI" id="CHEBI:61717"/>
    </ligand>
</feature>
<feature type="binding site" description="axial binding residue" evidence="1 5">
    <location>
        <position position="141"/>
    </location>
    <ligand>
        <name>heme c</name>
        <dbReference type="ChEBI" id="CHEBI:61717"/>
    </ligand>
    <ligandPart>
        <name>Fe</name>
        <dbReference type="ChEBI" id="CHEBI:18248"/>
    </ligandPart>
</feature>
<feature type="helix" evidence="6">
    <location>
        <begin position="25"/>
        <end position="47"/>
    </location>
</feature>
<feature type="helix" evidence="6">
    <location>
        <begin position="55"/>
        <end position="66"/>
    </location>
</feature>
<feature type="helix" evidence="6">
    <location>
        <begin position="67"/>
        <end position="69"/>
    </location>
</feature>
<feature type="turn" evidence="6">
    <location>
        <begin position="71"/>
        <end position="73"/>
    </location>
</feature>
<feature type="strand" evidence="6">
    <location>
        <begin position="79"/>
        <end position="84"/>
    </location>
</feature>
<feature type="helix" evidence="6">
    <location>
        <begin position="94"/>
        <end position="97"/>
    </location>
</feature>
<feature type="helix" evidence="6">
    <location>
        <begin position="99"/>
        <end position="119"/>
    </location>
</feature>
<feature type="helix" evidence="6">
    <location>
        <begin position="123"/>
        <end position="129"/>
    </location>
</feature>
<feature type="turn" evidence="6">
    <location>
        <begin position="130"/>
        <end position="134"/>
    </location>
</feature>
<feature type="helix" evidence="6">
    <location>
        <begin position="135"/>
        <end position="143"/>
    </location>
</feature>
<evidence type="ECO:0000269" key="1">
    <source>
    </source>
</evidence>
<evidence type="ECO:0000269" key="2">
    <source>
    </source>
</evidence>
<evidence type="ECO:0000303" key="3">
    <source>
    </source>
</evidence>
<evidence type="ECO:0000303" key="4">
    <source>
    </source>
</evidence>
<evidence type="ECO:0007744" key="5">
    <source>
        <dbReference type="PDB" id="1S05"/>
    </source>
</evidence>
<evidence type="ECO:0007829" key="6">
    <source>
        <dbReference type="PDB" id="1S05"/>
    </source>
</evidence>
<keyword id="KW-0002">3D-structure</keyword>
<keyword id="KW-0903">Direct protein sequencing</keyword>
<keyword id="KW-0249">Electron transport</keyword>
<keyword id="KW-0349">Heme</keyword>
<keyword id="KW-0408">Iron</keyword>
<keyword id="KW-0479">Metal-binding</keyword>
<keyword id="KW-0732">Signal</keyword>
<keyword id="KW-0813">Transport</keyword>
<accession>P00150</accession>